<organism>
    <name type="scientific">Neisseria gonorrhoeae</name>
    <dbReference type="NCBI Taxonomy" id="485"/>
    <lineage>
        <taxon>Bacteria</taxon>
        <taxon>Pseudomonadati</taxon>
        <taxon>Pseudomonadota</taxon>
        <taxon>Betaproteobacteria</taxon>
        <taxon>Neisseriales</taxon>
        <taxon>Neisseriaceae</taxon>
        <taxon>Neisseria</taxon>
    </lineage>
</organism>
<dbReference type="EMBL" id="M96731">
    <property type="protein sequence ID" value="AAA25503.1"/>
    <property type="molecule type" value="Genomic_DNA"/>
</dbReference>
<dbReference type="PIR" id="A43335">
    <property type="entry name" value="A43335"/>
</dbReference>
<dbReference type="RefSeq" id="WP_003693614.1">
    <property type="nucleotide sequence ID" value="NZ_CP012026.1"/>
</dbReference>
<dbReference type="SMR" id="Q01996"/>
<dbReference type="PATRIC" id="fig|485.48.peg.1488"/>
<dbReference type="GO" id="GO:0009279">
    <property type="term" value="C:cell outer membrane"/>
    <property type="evidence" value="ECO:0007669"/>
    <property type="project" value="UniProtKB-SubCell"/>
</dbReference>
<dbReference type="GO" id="GO:0015091">
    <property type="term" value="F:ferric iron transmembrane transporter activity"/>
    <property type="evidence" value="ECO:0007669"/>
    <property type="project" value="InterPro"/>
</dbReference>
<dbReference type="GO" id="GO:0015344">
    <property type="term" value="F:siderophore uptake transmembrane transporter activity"/>
    <property type="evidence" value="ECO:0007669"/>
    <property type="project" value="TreeGrafter"/>
</dbReference>
<dbReference type="CDD" id="cd01347">
    <property type="entry name" value="ligand_gated_channel"/>
    <property type="match status" value="1"/>
</dbReference>
<dbReference type="Gene3D" id="2.40.170.20">
    <property type="entry name" value="TonB-dependent receptor, beta-barrel domain"/>
    <property type="match status" value="1"/>
</dbReference>
<dbReference type="Gene3D" id="2.170.130.10">
    <property type="entry name" value="TonB-dependent receptor, plug domain"/>
    <property type="match status" value="1"/>
</dbReference>
<dbReference type="InterPro" id="IPR012910">
    <property type="entry name" value="Plug_dom"/>
</dbReference>
<dbReference type="InterPro" id="IPR037066">
    <property type="entry name" value="Plug_dom_sf"/>
</dbReference>
<dbReference type="InterPro" id="IPR039426">
    <property type="entry name" value="TonB-dep_rcpt-like"/>
</dbReference>
<dbReference type="InterPro" id="IPR000531">
    <property type="entry name" value="TonB-dep_rcpt_b-brl"/>
</dbReference>
<dbReference type="InterPro" id="IPR010916">
    <property type="entry name" value="TonB_box_CS"/>
</dbReference>
<dbReference type="InterPro" id="IPR010949">
    <property type="entry name" value="TonB_Hb/transfer/lactofer_rcpt"/>
</dbReference>
<dbReference type="InterPro" id="IPR010948">
    <property type="entry name" value="TonB_lacto/transferrin_rcpt"/>
</dbReference>
<dbReference type="InterPro" id="IPR036942">
    <property type="entry name" value="TonB_rcpt_b-brl_sf"/>
</dbReference>
<dbReference type="InterPro" id="IPR010917">
    <property type="entry name" value="TonB_rcpt_CS"/>
</dbReference>
<dbReference type="NCBIfam" id="TIGR01786">
    <property type="entry name" value="TonB-hemlactrns"/>
    <property type="match status" value="1"/>
</dbReference>
<dbReference type="NCBIfam" id="TIGR01776">
    <property type="entry name" value="TonB-tbp-lbp"/>
    <property type="match status" value="1"/>
</dbReference>
<dbReference type="PANTHER" id="PTHR30069">
    <property type="entry name" value="TONB-DEPENDENT OUTER MEMBRANE RECEPTOR"/>
    <property type="match status" value="1"/>
</dbReference>
<dbReference type="PANTHER" id="PTHR30069:SF54">
    <property type="entry name" value="TRANSFERRIN-BINDING PROTEIN A"/>
    <property type="match status" value="1"/>
</dbReference>
<dbReference type="Pfam" id="PF07715">
    <property type="entry name" value="Plug"/>
    <property type="match status" value="1"/>
</dbReference>
<dbReference type="Pfam" id="PF00593">
    <property type="entry name" value="TonB_dep_Rec_b-barrel"/>
    <property type="match status" value="1"/>
</dbReference>
<dbReference type="SUPFAM" id="SSF56935">
    <property type="entry name" value="Porins"/>
    <property type="match status" value="1"/>
</dbReference>
<dbReference type="PROSITE" id="PS00430">
    <property type="entry name" value="TONB_DEPENDENT_REC_1"/>
    <property type="match status" value="1"/>
</dbReference>
<dbReference type="PROSITE" id="PS01156">
    <property type="entry name" value="TONB_DEPENDENT_REC_2"/>
    <property type="match status" value="1"/>
</dbReference>
<dbReference type="PROSITE" id="PS52016">
    <property type="entry name" value="TONB_DEPENDENT_REC_3"/>
    <property type="match status" value="1"/>
</dbReference>
<keyword id="KW-0998">Cell outer membrane</keyword>
<keyword id="KW-0472">Membrane</keyword>
<keyword id="KW-0675">Receptor</keyword>
<keyword id="KW-0732">Signal</keyword>
<keyword id="KW-0798">TonB box</keyword>
<keyword id="KW-0812">Transmembrane</keyword>
<keyword id="KW-1134">Transmembrane beta strand</keyword>
<keyword id="KW-0813">Transport</keyword>
<keyword id="KW-0843">Virulence</keyword>
<name>TBPA_NEIGO</name>
<comment type="function">
    <text evidence="1">Neisseria acquires iron by extracting it from serum transferrin (TF) in its human host. Acts as a TF receptor and is required for TF utilization. Binds both apo- and holo-TF, via the TF C-terminus.</text>
</comment>
<comment type="subunit">
    <text evidence="1">Binds both human apo- and holo-transferrin (TF), via the TF C-terminus. Forms a large complex with TF and TbpB.</text>
</comment>
<comment type="subcellular location">
    <subcellularLocation>
        <location evidence="1 3">Cell outer membrane</location>
        <topology evidence="1 3">Multi-pass membrane protein</topology>
    </subcellularLocation>
</comment>
<comment type="similarity">
    <text evidence="6">Belongs to the TonB-dependent receptor family.</text>
</comment>
<accession>Q01996</accession>
<reference key="1">
    <citation type="journal article" date="1992" name="J. Bacteriol.">
        <title>Gonococcal transferrin-binding protein 1 is required for transferrin utilization and is homologous to TonB-dependent outer membrane receptors.</title>
        <authorList>
            <person name="Cornelissen C.N."/>
            <person name="Biswas G.D."/>
            <person name="Tsai J."/>
            <person name="Paruchuri D.K."/>
            <person name="Thompson S.A."/>
            <person name="Sparling P.F."/>
        </authorList>
    </citation>
    <scope>NUCLEOTIDE SEQUENCE [GENOMIC DNA]</scope>
    <source>
        <strain>FA19</strain>
    </source>
</reference>
<protein>
    <recommendedName>
        <fullName evidence="6">Transferrin-binding protein A</fullName>
        <shortName>TbpA</shortName>
    </recommendedName>
    <alternativeName>
        <fullName evidence="5">Transferrin-binding protein 1</fullName>
    </alternativeName>
</protein>
<proteinExistence type="inferred from homology"/>
<evidence type="ECO:0000250" key="1">
    <source>
        <dbReference type="UniProtKB" id="Q9K0U9"/>
    </source>
</evidence>
<evidence type="ECO:0000255" key="2"/>
<evidence type="ECO:0000255" key="3">
    <source>
        <dbReference type="PROSITE-ProRule" id="PRU01360"/>
    </source>
</evidence>
<evidence type="ECO:0000256" key="4">
    <source>
        <dbReference type="SAM" id="MobiDB-lite"/>
    </source>
</evidence>
<evidence type="ECO:0000303" key="5">
    <source>
    </source>
</evidence>
<evidence type="ECO:0000305" key="6"/>
<feature type="signal peptide" evidence="2">
    <location>
        <begin position="1"/>
        <end position="24"/>
    </location>
</feature>
<feature type="chain" id="PRO_0000034773" description="Transferrin-binding protein A" evidence="2">
    <location>
        <begin position="25"/>
        <end position="915"/>
    </location>
</feature>
<feature type="domain" description="TBDR plug" evidence="3">
    <location>
        <begin position="51"/>
        <end position="176"/>
    </location>
</feature>
<feature type="domain" description="TBDR beta-barrel" evidence="3">
    <location>
        <begin position="187"/>
        <end position="915"/>
    </location>
</feature>
<feature type="region of interest" description="Disordered" evidence="4">
    <location>
        <begin position="526"/>
        <end position="545"/>
    </location>
</feature>
<feature type="short sequence motif" description="TonB box">
    <location>
        <begin position="38"/>
        <end position="45"/>
    </location>
</feature>
<feature type="short sequence motif" description="TonB C-terminal box">
    <location>
        <begin position="898"/>
        <end position="915"/>
    </location>
</feature>
<feature type="compositionally biased region" description="Polar residues" evidence="4">
    <location>
        <begin position="526"/>
        <end position="540"/>
    </location>
</feature>
<gene>
    <name evidence="5" type="primary">tbpA</name>
</gene>
<sequence length="915" mass="102213">MQQQHLFRLNILCLSLMTALPAYAENVQAGQAQEKQLDTIQVKAKKQKTRRDNEVTGLGKLVKTADTLSKEQVLDIRDLTRYDPGIAVVEQGRGASSGYSIRGMDKNRVSLTVDGLAQIQSYTAQAALGGTRTAGSSGAINEIEYENVKAVEISKGSNSVEQGSGALAGSVAFQTKTADDVIGEGRQWGIQSKTAYSGKNRGLTQSIALAGRIGGAEALLIRTGRHAGEIRAHEAAGRGVQSFNRLAPVDDGSKYAYFIVEEECKNGGHEKCKANPKKDVVGEDKRQTVSTRDYTGPNRFLADPLSYESRSWLFRPGFRFENKRHYIGGILERTQQTFDTRDMTVPAFLTKAVFDANQKQAGSLRGNGKYAGNHKYGGLFTSGENNAPVGAEYGTGVFYDETHTKSRYGLEYVYTNADKDTWADYARLSYDRQGIGLDNHFQQTHCSADGSDKYCRPSADKPFSYYKSDRVIYGESHKLLQAAFKKSFDTAKIRHNLSVNLGYDRFGSNLRHQDYYYQSANRAYSLKTPPQNNGKKTSPNGREKNPYWVSIGRGNVVTRQICLFGNNTYTDCTPRSINGKSYYAAVRDNVRLGRWADVGAGLRYDYRSTHSDDGSVSTGTHRTLSWNAGIVLKPADWLDLTYRTSTGFRLPSFAEMYGWRSGDKIKAVKIDPEKSFNKEAGIVFKGDFGNLEASWFNNAYRDLIVRGYEAQIKDGKEQVKGNPAYLNAQSARITGINILGKIDWNGVWDKLPEGWYSTFAYNRVRVRDIKKRADRTDIQSHLFDAIQPSRYVVGSGYDQPEGKWGVNGMLTYSKAKEITELLGSRALLNGNSRNTKATARRTRPWYIVDVSGYYTVKKHFTLRAGVYNLLNHRYVTWENVRQTAAGAVNQHKNVGVYNRYAAPGRNYTFSLEMKF</sequence>